<organism>
    <name type="scientific">Shewanella halifaxensis (strain HAW-EB4)</name>
    <dbReference type="NCBI Taxonomy" id="458817"/>
    <lineage>
        <taxon>Bacteria</taxon>
        <taxon>Pseudomonadati</taxon>
        <taxon>Pseudomonadota</taxon>
        <taxon>Gammaproteobacteria</taxon>
        <taxon>Alteromonadales</taxon>
        <taxon>Shewanellaceae</taxon>
        <taxon>Shewanella</taxon>
    </lineage>
</organism>
<feature type="chain" id="PRO_1000082955" description="UPF0251 protein Shal_3723">
    <location>
        <begin position="1"/>
        <end position="96"/>
    </location>
</feature>
<sequence length="96" mass="10430">MSRPKKCRHLSSCVPCSLFKPNGIPSSELEKIQLEADEFEALNLGDVQKLSQLDAAASMGISRQTFGYLLASARRKVATAVTQGQALLLPLNVKKD</sequence>
<proteinExistence type="inferred from homology"/>
<accession>B0TUZ6</accession>
<evidence type="ECO:0000255" key="1">
    <source>
        <dbReference type="HAMAP-Rule" id="MF_00674"/>
    </source>
</evidence>
<protein>
    <recommendedName>
        <fullName evidence="1">UPF0251 protein Shal_3723</fullName>
    </recommendedName>
</protein>
<dbReference type="EMBL" id="CP000931">
    <property type="protein sequence ID" value="ABZ78263.1"/>
    <property type="molecule type" value="Genomic_DNA"/>
</dbReference>
<dbReference type="RefSeq" id="WP_012278781.1">
    <property type="nucleotide sequence ID" value="NC_010334.1"/>
</dbReference>
<dbReference type="SMR" id="B0TUZ6"/>
<dbReference type="STRING" id="458817.Shal_3723"/>
<dbReference type="KEGG" id="shl:Shal_3723"/>
<dbReference type="eggNOG" id="COG1342">
    <property type="taxonomic scope" value="Bacteria"/>
</dbReference>
<dbReference type="HOGENOM" id="CLU_094511_2_1_6"/>
<dbReference type="OrthoDB" id="280278at2"/>
<dbReference type="Proteomes" id="UP000001317">
    <property type="component" value="Chromosome"/>
</dbReference>
<dbReference type="Gene3D" id="1.10.10.10">
    <property type="entry name" value="Winged helix-like DNA-binding domain superfamily/Winged helix DNA-binding domain"/>
    <property type="match status" value="1"/>
</dbReference>
<dbReference type="HAMAP" id="MF_00674">
    <property type="entry name" value="UPF0251"/>
    <property type="match status" value="1"/>
</dbReference>
<dbReference type="InterPro" id="IPR002852">
    <property type="entry name" value="UPF0251"/>
</dbReference>
<dbReference type="InterPro" id="IPR036388">
    <property type="entry name" value="WH-like_DNA-bd_sf"/>
</dbReference>
<dbReference type="PANTHER" id="PTHR37478">
    <property type="match status" value="1"/>
</dbReference>
<dbReference type="PANTHER" id="PTHR37478:SF2">
    <property type="entry name" value="UPF0251 PROTEIN TK0562"/>
    <property type="match status" value="1"/>
</dbReference>
<dbReference type="Pfam" id="PF02001">
    <property type="entry name" value="DUF134"/>
    <property type="match status" value="1"/>
</dbReference>
<name>Y3723_SHEHH</name>
<reference key="1">
    <citation type="submission" date="2008-01" db="EMBL/GenBank/DDBJ databases">
        <title>Complete sequence of Shewanella halifaxensis HAW-EB4.</title>
        <authorList>
            <consortium name="US DOE Joint Genome Institute"/>
            <person name="Copeland A."/>
            <person name="Lucas S."/>
            <person name="Lapidus A."/>
            <person name="Glavina del Rio T."/>
            <person name="Dalin E."/>
            <person name="Tice H."/>
            <person name="Bruce D."/>
            <person name="Goodwin L."/>
            <person name="Pitluck S."/>
            <person name="Sims D."/>
            <person name="Brettin T."/>
            <person name="Detter J.C."/>
            <person name="Han C."/>
            <person name="Kuske C.R."/>
            <person name="Schmutz J."/>
            <person name="Larimer F."/>
            <person name="Land M."/>
            <person name="Hauser L."/>
            <person name="Kyrpides N."/>
            <person name="Kim E."/>
            <person name="Zhao J.-S."/>
            <person name="Richardson P."/>
        </authorList>
    </citation>
    <scope>NUCLEOTIDE SEQUENCE [LARGE SCALE GENOMIC DNA]</scope>
    <source>
        <strain>HAW-EB4</strain>
    </source>
</reference>
<gene>
    <name type="ordered locus">Shal_3723</name>
</gene>
<comment type="similarity">
    <text evidence="1">Belongs to the UPF0251 family.</text>
</comment>